<dbReference type="EC" id="4.1.1.19" evidence="1"/>
<dbReference type="EMBL" id="CR626927">
    <property type="protein sequence ID" value="CAH05973.1"/>
    <property type="molecule type" value="Genomic_DNA"/>
</dbReference>
<dbReference type="RefSeq" id="WP_005783873.1">
    <property type="nucleotide sequence ID" value="NZ_UFTH01000001.1"/>
</dbReference>
<dbReference type="SMR" id="Q5LIQ3"/>
<dbReference type="PaxDb" id="272559-BF9343_0194"/>
<dbReference type="GeneID" id="60368283"/>
<dbReference type="KEGG" id="bfs:BF9343_0194"/>
<dbReference type="eggNOG" id="COG1166">
    <property type="taxonomic scope" value="Bacteria"/>
</dbReference>
<dbReference type="HOGENOM" id="CLU_027243_1_0_10"/>
<dbReference type="UniPathway" id="UPA00186">
    <property type="reaction ID" value="UER00284"/>
</dbReference>
<dbReference type="Proteomes" id="UP000006731">
    <property type="component" value="Chromosome"/>
</dbReference>
<dbReference type="GO" id="GO:0008792">
    <property type="term" value="F:arginine decarboxylase activity"/>
    <property type="evidence" value="ECO:0007669"/>
    <property type="project" value="UniProtKB-UniRule"/>
</dbReference>
<dbReference type="GO" id="GO:0046872">
    <property type="term" value="F:metal ion binding"/>
    <property type="evidence" value="ECO:0007669"/>
    <property type="project" value="UniProtKB-KW"/>
</dbReference>
<dbReference type="GO" id="GO:0006527">
    <property type="term" value="P:arginine catabolic process"/>
    <property type="evidence" value="ECO:0007669"/>
    <property type="project" value="InterPro"/>
</dbReference>
<dbReference type="GO" id="GO:0008295">
    <property type="term" value="P:spermidine biosynthetic process"/>
    <property type="evidence" value="ECO:0007669"/>
    <property type="project" value="UniProtKB-UniRule"/>
</dbReference>
<dbReference type="CDD" id="cd06830">
    <property type="entry name" value="PLPDE_III_ADC"/>
    <property type="match status" value="1"/>
</dbReference>
<dbReference type="FunFam" id="1.20.58.930:FF:000002">
    <property type="entry name" value="Biosynthetic arginine decarboxylase"/>
    <property type="match status" value="1"/>
</dbReference>
<dbReference type="FunFam" id="3.20.20.10:FF:000001">
    <property type="entry name" value="Biosynthetic arginine decarboxylase"/>
    <property type="match status" value="1"/>
</dbReference>
<dbReference type="Gene3D" id="1.10.287.3440">
    <property type="match status" value="1"/>
</dbReference>
<dbReference type="Gene3D" id="1.20.58.930">
    <property type="match status" value="1"/>
</dbReference>
<dbReference type="Gene3D" id="3.20.20.10">
    <property type="entry name" value="Alanine racemase"/>
    <property type="match status" value="1"/>
</dbReference>
<dbReference type="Gene3D" id="2.40.37.10">
    <property type="entry name" value="Lyase, Ornithine Decarboxylase, Chain A, domain 1"/>
    <property type="match status" value="1"/>
</dbReference>
<dbReference type="HAMAP" id="MF_01417">
    <property type="entry name" value="SpeA"/>
    <property type="match status" value="1"/>
</dbReference>
<dbReference type="InterPro" id="IPR009006">
    <property type="entry name" value="Ala_racemase/Decarboxylase_C"/>
</dbReference>
<dbReference type="InterPro" id="IPR040634">
    <property type="entry name" value="Arg_decarb_HB"/>
</dbReference>
<dbReference type="InterPro" id="IPR041128">
    <property type="entry name" value="Arg_decarbox_C"/>
</dbReference>
<dbReference type="InterPro" id="IPR002985">
    <property type="entry name" value="Arg_decrbxlase"/>
</dbReference>
<dbReference type="InterPro" id="IPR022657">
    <property type="entry name" value="De-COase2_CS"/>
</dbReference>
<dbReference type="InterPro" id="IPR022644">
    <property type="entry name" value="De-COase2_N"/>
</dbReference>
<dbReference type="InterPro" id="IPR022653">
    <property type="entry name" value="De-COase2_pyr-phos_BS"/>
</dbReference>
<dbReference type="InterPro" id="IPR000183">
    <property type="entry name" value="Orn/DAP/Arg_de-COase"/>
</dbReference>
<dbReference type="InterPro" id="IPR029066">
    <property type="entry name" value="PLP-binding_barrel"/>
</dbReference>
<dbReference type="NCBIfam" id="NF003763">
    <property type="entry name" value="PRK05354.1"/>
    <property type="match status" value="1"/>
</dbReference>
<dbReference type="NCBIfam" id="TIGR01273">
    <property type="entry name" value="speA"/>
    <property type="match status" value="1"/>
</dbReference>
<dbReference type="PANTHER" id="PTHR43295">
    <property type="entry name" value="ARGININE DECARBOXYLASE"/>
    <property type="match status" value="1"/>
</dbReference>
<dbReference type="PANTHER" id="PTHR43295:SF9">
    <property type="entry name" value="BIOSYNTHETIC ARGININE DECARBOXYLASE"/>
    <property type="match status" value="1"/>
</dbReference>
<dbReference type="Pfam" id="PF17810">
    <property type="entry name" value="Arg_decarb_HB"/>
    <property type="match status" value="1"/>
</dbReference>
<dbReference type="Pfam" id="PF17944">
    <property type="entry name" value="Arg_decarbox_C"/>
    <property type="match status" value="1"/>
</dbReference>
<dbReference type="Pfam" id="PF02784">
    <property type="entry name" value="Orn_Arg_deC_N"/>
    <property type="match status" value="1"/>
</dbReference>
<dbReference type="PIRSF" id="PIRSF001336">
    <property type="entry name" value="Arg_decrbxlase"/>
    <property type="match status" value="1"/>
</dbReference>
<dbReference type="PRINTS" id="PR01180">
    <property type="entry name" value="ARGDCRBXLASE"/>
</dbReference>
<dbReference type="PRINTS" id="PR01179">
    <property type="entry name" value="ODADCRBXLASE"/>
</dbReference>
<dbReference type="SUPFAM" id="SSF50621">
    <property type="entry name" value="Alanine racemase C-terminal domain-like"/>
    <property type="match status" value="1"/>
</dbReference>
<dbReference type="SUPFAM" id="SSF51419">
    <property type="entry name" value="PLP-binding barrel"/>
    <property type="match status" value="1"/>
</dbReference>
<dbReference type="PROSITE" id="PS00878">
    <property type="entry name" value="ODR_DC_2_1"/>
    <property type="match status" value="1"/>
</dbReference>
<dbReference type="PROSITE" id="PS00879">
    <property type="entry name" value="ODR_DC_2_2"/>
    <property type="match status" value="1"/>
</dbReference>
<accession>Q5LIQ3</accession>
<name>SPEA_BACFN</name>
<reference key="1">
    <citation type="journal article" date="2005" name="Science">
        <title>Extensive DNA inversions in the B. fragilis genome control variable gene expression.</title>
        <authorList>
            <person name="Cerdeno-Tarraga A.-M."/>
            <person name="Patrick S."/>
            <person name="Crossman L.C."/>
            <person name="Blakely G."/>
            <person name="Abratt V."/>
            <person name="Lennard N."/>
            <person name="Poxton I."/>
            <person name="Duerden B."/>
            <person name="Harris B."/>
            <person name="Quail M.A."/>
            <person name="Barron A."/>
            <person name="Clark L."/>
            <person name="Corton C."/>
            <person name="Doggett J."/>
            <person name="Holden M.T.G."/>
            <person name="Larke N."/>
            <person name="Line A."/>
            <person name="Lord A."/>
            <person name="Norbertczak H."/>
            <person name="Ormond D."/>
            <person name="Price C."/>
            <person name="Rabbinowitsch E."/>
            <person name="Woodward J."/>
            <person name="Barrell B.G."/>
            <person name="Parkhill J."/>
        </authorList>
    </citation>
    <scope>NUCLEOTIDE SEQUENCE [LARGE SCALE GENOMIC DNA]</scope>
    <source>
        <strain>ATCC 25285 / DSM 2151 / CCUG 4856 / JCM 11019 / LMG 10263 / NCTC 9343 / Onslow / VPI 2553 / EN-2</strain>
    </source>
</reference>
<proteinExistence type="inferred from homology"/>
<keyword id="KW-0210">Decarboxylase</keyword>
<keyword id="KW-0456">Lyase</keyword>
<keyword id="KW-0460">Magnesium</keyword>
<keyword id="KW-0479">Metal-binding</keyword>
<keyword id="KW-0620">Polyamine biosynthesis</keyword>
<keyword id="KW-0663">Pyridoxal phosphate</keyword>
<keyword id="KW-0745">Spermidine biosynthesis</keyword>
<comment type="function">
    <text evidence="1">Catalyzes the biosynthesis of agmatine from arginine.</text>
</comment>
<comment type="catalytic activity">
    <reaction evidence="1">
        <text>L-arginine + H(+) = agmatine + CO2</text>
        <dbReference type="Rhea" id="RHEA:17641"/>
        <dbReference type="ChEBI" id="CHEBI:15378"/>
        <dbReference type="ChEBI" id="CHEBI:16526"/>
        <dbReference type="ChEBI" id="CHEBI:32682"/>
        <dbReference type="ChEBI" id="CHEBI:58145"/>
        <dbReference type="EC" id="4.1.1.19"/>
    </reaction>
</comment>
<comment type="cofactor">
    <cofactor evidence="1">
        <name>Mg(2+)</name>
        <dbReference type="ChEBI" id="CHEBI:18420"/>
    </cofactor>
</comment>
<comment type="cofactor">
    <cofactor evidence="1">
        <name>pyridoxal 5'-phosphate</name>
        <dbReference type="ChEBI" id="CHEBI:597326"/>
    </cofactor>
</comment>
<comment type="pathway">
    <text evidence="1">Amine and polyamine biosynthesis; agmatine biosynthesis; agmatine from L-arginine: step 1/1.</text>
</comment>
<comment type="similarity">
    <text evidence="1">Belongs to the Orn/Lys/Arg decarboxylase class-II family. SpeA subfamily.</text>
</comment>
<organism>
    <name type="scientific">Bacteroides fragilis (strain ATCC 25285 / DSM 2151 / CCUG 4856 / JCM 11019 / LMG 10263 / NCTC 9343 / Onslow / VPI 2553 / EN-2)</name>
    <dbReference type="NCBI Taxonomy" id="272559"/>
    <lineage>
        <taxon>Bacteria</taxon>
        <taxon>Pseudomonadati</taxon>
        <taxon>Bacteroidota</taxon>
        <taxon>Bacteroidia</taxon>
        <taxon>Bacteroidales</taxon>
        <taxon>Bacteroidaceae</taxon>
        <taxon>Bacteroides</taxon>
    </lineage>
</organism>
<gene>
    <name evidence="1" type="primary">speA</name>
    <name type="ordered locus">BF0196</name>
</gene>
<protein>
    <recommendedName>
        <fullName evidence="1">Biosynthetic arginine decarboxylase</fullName>
        <shortName evidence="1">ADC</shortName>
        <ecNumber evidence="1">4.1.1.19</ecNumber>
    </recommendedName>
</protein>
<feature type="chain" id="PRO_1000024254" description="Biosynthetic arginine decarboxylase">
    <location>
        <begin position="1"/>
        <end position="630"/>
    </location>
</feature>
<feature type="binding site" evidence="1">
    <location>
        <begin position="281"/>
        <end position="291"/>
    </location>
    <ligand>
        <name>substrate</name>
    </ligand>
</feature>
<feature type="modified residue" description="N6-(pyridoxal phosphate)lysine" evidence="1">
    <location>
        <position position="99"/>
    </location>
</feature>
<sequence length="630" mass="71190">MRKWRIEDSEELYNITGWGTSYFGINDKGHVVVTPRKDGVAVDLKELVDELQLRDVAAPMLVRFPDILDNRIEKTAYCFKQASEEYGYKAQNFIIYPIKVNQMRPVVEEIISHGKKFNLGLEAGSKPELHAVIAVNTDSDSLIICNGYKDESYIELALLAQKMGKRIFLVVEKMNELKLIARMAKQLNVQPNIGIRIKLASSGSGKWEESGGDASKFGLTSSELLEALDFLESKGMKDCLKLIHFHIGSQVTKIRRIKTALREASQFYVQLHAMGFNVEFVDIGGGLGVDYDGTRSSSSESSVNYSIQEYVNDSISTLVDASDKNGIPHPNIITESGRALTAHHSVLIFEVLETATLPQWDDEEEIAPDAHELVQELYGIWDTLNQNKMLEAWHDAQQIREEALDLFSHGIVDLKTRAQIERLYWSITREINQIAGGLKHAPDEFRGLSKLLADKYFCNFSLFQSLPDSWAIDQIFPIMPIQRLDEKPDRSATLQDITCDSDGKIANFISTRNVAHYMPVHSLKQKEPYYVAVFLVGAYQEILGDMHNLFGDTNAVHVSVNEKGYNIEQIIDGETVAEVLDYVQYSPKKLVRTLETWVTKSVKEGKISVEEGKEFLSNYRSGLYGYTYLE</sequence>
<evidence type="ECO:0000255" key="1">
    <source>
        <dbReference type="HAMAP-Rule" id="MF_01417"/>
    </source>
</evidence>